<sequence>MRLLIGSDDSGCIKELVANRGTNTSEQSALQPLHLEAHLERGLNAKAHQMLQISDNECLLARMSGDIELVSWSREPRGGEEDKPVFEVSSFQVMATLGGLLDGEKMQELHKRSQRRAASADRFVALFALPGQPQRYFAATMSGQFHFLALADGDLKLQKTFSVRGPVEFAQLYDLEETEKLVFAYGGEDNLIKLVEVSRDLEQLEQIWEAKNVKNDRLDLKVPIWPAALRFLQPAVSPASEGLNYQFIAVTRHSHLHFYQTTHGRKPFRSVDLLPNREPTTSLEVVGDVTPLGNVKSTSFEGFSIITTDTKKSILQFEPSGHLLGKFGGSDIKGFPSYIHVQGKYLVEGGLDRYVRVFELKNRNMLLKVFAGGKVSSVLLLDVSDVELPLSKKEKNKRRHKRVLDEDQEREEDNELWAQLDGSSKRRKSKPRLDG</sequence>
<dbReference type="EMBL" id="AE016819">
    <property type="protein sequence ID" value="AAS53349.1"/>
    <property type="molecule type" value="Genomic_DNA"/>
</dbReference>
<dbReference type="RefSeq" id="NP_985525.1">
    <property type="nucleotide sequence ID" value="NM_210879.1"/>
</dbReference>
<dbReference type="SMR" id="Q754U4"/>
<dbReference type="FunCoup" id="Q754U4">
    <property type="interactions" value="701"/>
</dbReference>
<dbReference type="STRING" id="284811.Q754U4"/>
<dbReference type="EnsemblFungi" id="AAS53349">
    <property type="protein sequence ID" value="AAS53349"/>
    <property type="gene ID" value="AGOS_AFL023C"/>
</dbReference>
<dbReference type="GeneID" id="4621758"/>
<dbReference type="KEGG" id="ago:AGOS_AFL023C"/>
<dbReference type="eggNOG" id="KOG3881">
    <property type="taxonomic scope" value="Eukaryota"/>
</dbReference>
<dbReference type="HOGENOM" id="CLU_033769_4_0_1"/>
<dbReference type="InParanoid" id="Q754U4"/>
<dbReference type="OMA" id="IWEAKNV"/>
<dbReference type="OrthoDB" id="18388at2759"/>
<dbReference type="Proteomes" id="UP000000591">
    <property type="component" value="Chromosome VI"/>
</dbReference>
<dbReference type="GO" id="GO:0005730">
    <property type="term" value="C:nucleolus"/>
    <property type="evidence" value="ECO:0000318"/>
    <property type="project" value="GO_Central"/>
</dbReference>
<dbReference type="GO" id="GO:0030687">
    <property type="term" value="C:preribosome, large subunit precursor"/>
    <property type="evidence" value="ECO:0000318"/>
    <property type="project" value="GO_Central"/>
</dbReference>
<dbReference type="GO" id="GO:0042273">
    <property type="term" value="P:ribosomal large subunit biogenesis"/>
    <property type="evidence" value="ECO:0000318"/>
    <property type="project" value="GO_Central"/>
</dbReference>
<dbReference type="GO" id="GO:0006364">
    <property type="term" value="P:rRNA processing"/>
    <property type="evidence" value="ECO:0007669"/>
    <property type="project" value="UniProtKB-KW"/>
</dbReference>
<dbReference type="CDD" id="cd22858">
    <property type="entry name" value="Nsa1"/>
    <property type="match status" value="1"/>
</dbReference>
<dbReference type="InterPro" id="IPR036322">
    <property type="entry name" value="WD40_repeat_dom_sf"/>
</dbReference>
<dbReference type="InterPro" id="IPR037379">
    <property type="entry name" value="WDR74/Nsa1"/>
</dbReference>
<dbReference type="PANTHER" id="PTHR16038">
    <property type="entry name" value="NOP SEVEN ASSOCIATED PROTEIN 1"/>
    <property type="match status" value="1"/>
</dbReference>
<dbReference type="PANTHER" id="PTHR16038:SF4">
    <property type="entry name" value="WD REPEAT-CONTAINING PROTEIN 74"/>
    <property type="match status" value="1"/>
</dbReference>
<dbReference type="SUPFAM" id="SSF50978">
    <property type="entry name" value="WD40 repeat-like"/>
    <property type="match status" value="1"/>
</dbReference>
<comment type="function">
    <text evidence="1">Involved in the biogenesis of the 60S ribosomal subunit.</text>
</comment>
<comment type="subunit">
    <text evidence="1">Component of the pre-66S ribosomal particle.</text>
</comment>
<comment type="subcellular location">
    <subcellularLocation>
        <location evidence="1">Nucleus</location>
        <location evidence="1">Nucleolus</location>
    </subcellularLocation>
</comment>
<comment type="similarity">
    <text evidence="3">Belongs to the NSA1 family.</text>
</comment>
<protein>
    <recommendedName>
        <fullName>Ribosome biogenesis protein NSA1</fullName>
    </recommendedName>
</protein>
<accession>Q754U4</accession>
<evidence type="ECO:0000250" key="1"/>
<evidence type="ECO:0000256" key="2">
    <source>
        <dbReference type="SAM" id="MobiDB-lite"/>
    </source>
</evidence>
<evidence type="ECO:0000305" key="3"/>
<reference key="1">
    <citation type="journal article" date="2004" name="Science">
        <title>The Ashbya gossypii genome as a tool for mapping the ancient Saccharomyces cerevisiae genome.</title>
        <authorList>
            <person name="Dietrich F.S."/>
            <person name="Voegeli S."/>
            <person name="Brachat S."/>
            <person name="Lerch A."/>
            <person name="Gates K."/>
            <person name="Steiner S."/>
            <person name="Mohr C."/>
            <person name="Poehlmann R."/>
            <person name="Luedi P."/>
            <person name="Choi S."/>
            <person name="Wing R.A."/>
            <person name="Flavier A."/>
            <person name="Gaffney T.D."/>
            <person name="Philippsen P."/>
        </authorList>
    </citation>
    <scope>NUCLEOTIDE SEQUENCE [LARGE SCALE GENOMIC DNA]</scope>
    <source>
        <strain>ATCC 10895 / CBS 109.51 / FGSC 9923 / NRRL Y-1056</strain>
    </source>
</reference>
<reference key="2">
    <citation type="journal article" date="2013" name="G3 (Bethesda)">
        <title>Genomes of Ashbya fungi isolated from insects reveal four mating-type loci, numerous translocations, lack of transposons, and distinct gene duplications.</title>
        <authorList>
            <person name="Dietrich F.S."/>
            <person name="Voegeli S."/>
            <person name="Kuo S."/>
            <person name="Philippsen P."/>
        </authorList>
    </citation>
    <scope>GENOME REANNOTATION</scope>
    <source>
        <strain>ATCC 10895 / CBS 109.51 / FGSC 9923 / NRRL Y-1056</strain>
    </source>
</reference>
<proteinExistence type="inferred from homology"/>
<name>NSA1_EREGS</name>
<organism>
    <name type="scientific">Eremothecium gossypii (strain ATCC 10895 / CBS 109.51 / FGSC 9923 / NRRL Y-1056)</name>
    <name type="common">Yeast</name>
    <name type="synonym">Ashbya gossypii</name>
    <dbReference type="NCBI Taxonomy" id="284811"/>
    <lineage>
        <taxon>Eukaryota</taxon>
        <taxon>Fungi</taxon>
        <taxon>Dikarya</taxon>
        <taxon>Ascomycota</taxon>
        <taxon>Saccharomycotina</taxon>
        <taxon>Saccharomycetes</taxon>
        <taxon>Saccharomycetales</taxon>
        <taxon>Saccharomycetaceae</taxon>
        <taxon>Eremothecium</taxon>
    </lineage>
</organism>
<feature type="chain" id="PRO_0000320395" description="Ribosome biogenesis protein NSA1">
    <location>
        <begin position="1"/>
        <end position="435"/>
    </location>
</feature>
<feature type="region of interest" description="Disordered" evidence="2">
    <location>
        <begin position="394"/>
        <end position="435"/>
    </location>
</feature>
<feature type="compositionally biased region" description="Acidic residues" evidence="2">
    <location>
        <begin position="406"/>
        <end position="415"/>
    </location>
</feature>
<feature type="compositionally biased region" description="Basic residues" evidence="2">
    <location>
        <begin position="425"/>
        <end position="435"/>
    </location>
</feature>
<keyword id="KW-0539">Nucleus</keyword>
<keyword id="KW-1185">Reference proteome</keyword>
<keyword id="KW-0690">Ribosome biogenesis</keyword>
<keyword id="KW-0698">rRNA processing</keyword>
<gene>
    <name type="primary">NSA1</name>
    <name type="ordered locus">AFL023C</name>
</gene>